<organism>
    <name type="scientific">Rickettsia akari (strain Hartford)</name>
    <dbReference type="NCBI Taxonomy" id="293614"/>
    <lineage>
        <taxon>Bacteria</taxon>
        <taxon>Pseudomonadati</taxon>
        <taxon>Pseudomonadota</taxon>
        <taxon>Alphaproteobacteria</taxon>
        <taxon>Rickettsiales</taxon>
        <taxon>Rickettsiaceae</taxon>
        <taxon>Rickettsieae</taxon>
        <taxon>Rickettsia</taxon>
        <taxon>spotted fever group</taxon>
    </lineage>
</organism>
<comment type="function">
    <text evidence="1">Together with its co-chaperonin GroES, plays an essential role in assisting protein folding. The GroEL-GroES system forms a nano-cage that allows encapsulation of the non-native substrate proteins and provides a physical environment optimized to promote and accelerate protein folding.</text>
</comment>
<comment type="catalytic activity">
    <reaction evidence="1">
        <text>ATP + H2O + a folded polypeptide = ADP + phosphate + an unfolded polypeptide.</text>
        <dbReference type="EC" id="5.6.1.7"/>
    </reaction>
</comment>
<comment type="subunit">
    <text evidence="1">Forms a cylinder of 14 subunits composed of two heptameric rings stacked back-to-back. Interacts with the co-chaperonin GroES.</text>
</comment>
<comment type="subcellular location">
    <subcellularLocation>
        <location evidence="1">Cytoplasm</location>
    </subcellularLocation>
</comment>
<comment type="similarity">
    <text evidence="1">Belongs to the chaperonin (HSP60) family.</text>
</comment>
<keyword id="KW-0067">ATP-binding</keyword>
<keyword id="KW-0143">Chaperone</keyword>
<keyword id="KW-0963">Cytoplasm</keyword>
<keyword id="KW-0413">Isomerase</keyword>
<keyword id="KW-0547">Nucleotide-binding</keyword>
<gene>
    <name evidence="1" type="primary">groEL</name>
    <name evidence="1" type="synonym">groL</name>
    <name type="ordered locus">A1C_04925</name>
</gene>
<accession>A8GPB6</accession>
<reference key="1">
    <citation type="submission" date="2007-09" db="EMBL/GenBank/DDBJ databases">
        <title>Complete genome sequence of Rickettsia akari.</title>
        <authorList>
            <person name="Madan A."/>
            <person name="Fahey J."/>
            <person name="Helton E."/>
            <person name="Ketteman M."/>
            <person name="Madan A."/>
            <person name="Rodrigues S."/>
            <person name="Sanchez A."/>
            <person name="Whiting M."/>
            <person name="Dasch G."/>
            <person name="Eremeeva M."/>
        </authorList>
    </citation>
    <scope>NUCLEOTIDE SEQUENCE [LARGE SCALE GENOMIC DNA]</scope>
    <source>
        <strain>Hartford</strain>
    </source>
</reference>
<proteinExistence type="inferred from homology"/>
<name>CH60_RICAH</name>
<evidence type="ECO:0000255" key="1">
    <source>
        <dbReference type="HAMAP-Rule" id="MF_00600"/>
    </source>
</evidence>
<evidence type="ECO:0000256" key="2">
    <source>
        <dbReference type="SAM" id="MobiDB-lite"/>
    </source>
</evidence>
<feature type="chain" id="PRO_1000025827" description="Chaperonin GroEL">
    <location>
        <begin position="1"/>
        <end position="548"/>
    </location>
</feature>
<feature type="region of interest" description="Disordered" evidence="2">
    <location>
        <begin position="527"/>
        <end position="548"/>
    </location>
</feature>
<feature type="compositionally biased region" description="Gly residues" evidence="2">
    <location>
        <begin position="538"/>
        <end position="548"/>
    </location>
</feature>
<feature type="binding site" evidence="1">
    <location>
        <begin position="30"/>
        <end position="33"/>
    </location>
    <ligand>
        <name>ATP</name>
        <dbReference type="ChEBI" id="CHEBI:30616"/>
    </ligand>
</feature>
<feature type="binding site" evidence="1">
    <location>
        <position position="51"/>
    </location>
    <ligand>
        <name>ATP</name>
        <dbReference type="ChEBI" id="CHEBI:30616"/>
    </ligand>
</feature>
<feature type="binding site" evidence="1">
    <location>
        <begin position="87"/>
        <end position="91"/>
    </location>
    <ligand>
        <name>ATP</name>
        <dbReference type="ChEBI" id="CHEBI:30616"/>
    </ligand>
</feature>
<feature type="binding site" evidence="1">
    <location>
        <position position="415"/>
    </location>
    <ligand>
        <name>ATP</name>
        <dbReference type="ChEBI" id="CHEBI:30616"/>
    </ligand>
</feature>
<feature type="binding site" evidence="1">
    <location>
        <position position="496"/>
    </location>
    <ligand>
        <name>ATP</name>
        <dbReference type="ChEBI" id="CHEBI:30616"/>
    </ligand>
</feature>
<sequence length="548" mass="58691">MATKLIKHGSKAREQMLEGIDVLADAVKVTLGPKGRNVLIEQSFGSPKITKDGVTVAKSIELKDKIRNAGAQLLKSAATKAAEVAGDGTTTATVLARALAREGNKLVAAGYNPMDLKRGMDLAVNAVVEEIKKSSKKINSQEEIAQVGTISSNGDKEIGEKIAKAMEEVGKEGVITVEEAKNFSFDVEVVKGMMFDRGYLSPYFVTNSEKMVAELENPFILLFEKKLSNLQPMLPILEAVVQSQRPLLIIAEDVEGEALATLVVNRLRGGLKVAAVKAPGFGDRRKAMMEDIAILTKGELITEDLGMKLENVSIKSLGTAKRVTVSKENTVIVDGSGDKKNIEDRVLQIKSQIAETTSDYDKEKLQERLAKLSGGVAVLKVGGATEVEVKERKDRVEDALAATRAAVEEGVVAGGGVTLLHASQTLTKLKVENKDQQAGIEIVIEALKDPLKQIIENAGENGGVVVGKLLEHNDKNYGFNAQDMQYVDMIKAGIIDPAKVVRTALQDAASVASLIITTETLIVDEPSDKEDAMPPMRGGMGGMGGMDF</sequence>
<protein>
    <recommendedName>
        <fullName evidence="1">Chaperonin GroEL</fullName>
        <ecNumber evidence="1">5.6.1.7</ecNumber>
    </recommendedName>
    <alternativeName>
        <fullName evidence="1">60 kDa chaperonin</fullName>
    </alternativeName>
    <alternativeName>
        <fullName evidence="1">Chaperonin-60</fullName>
        <shortName evidence="1">Cpn60</shortName>
    </alternativeName>
</protein>
<dbReference type="EC" id="5.6.1.7" evidence="1"/>
<dbReference type="EMBL" id="CP000847">
    <property type="protein sequence ID" value="ABV75241.1"/>
    <property type="molecule type" value="Genomic_DNA"/>
</dbReference>
<dbReference type="RefSeq" id="WP_012149871.1">
    <property type="nucleotide sequence ID" value="NC_009881.1"/>
</dbReference>
<dbReference type="SMR" id="A8GPB6"/>
<dbReference type="STRING" id="293614.A1C_04925"/>
<dbReference type="KEGG" id="rak:A1C_04925"/>
<dbReference type="eggNOG" id="COG0459">
    <property type="taxonomic scope" value="Bacteria"/>
</dbReference>
<dbReference type="HOGENOM" id="CLU_016503_3_0_5"/>
<dbReference type="Proteomes" id="UP000006830">
    <property type="component" value="Chromosome"/>
</dbReference>
<dbReference type="GO" id="GO:0005737">
    <property type="term" value="C:cytoplasm"/>
    <property type="evidence" value="ECO:0007669"/>
    <property type="project" value="UniProtKB-SubCell"/>
</dbReference>
<dbReference type="GO" id="GO:0005524">
    <property type="term" value="F:ATP binding"/>
    <property type="evidence" value="ECO:0007669"/>
    <property type="project" value="UniProtKB-UniRule"/>
</dbReference>
<dbReference type="GO" id="GO:0140662">
    <property type="term" value="F:ATP-dependent protein folding chaperone"/>
    <property type="evidence" value="ECO:0007669"/>
    <property type="project" value="InterPro"/>
</dbReference>
<dbReference type="GO" id="GO:0016853">
    <property type="term" value="F:isomerase activity"/>
    <property type="evidence" value="ECO:0007669"/>
    <property type="project" value="UniProtKB-KW"/>
</dbReference>
<dbReference type="GO" id="GO:0051082">
    <property type="term" value="F:unfolded protein binding"/>
    <property type="evidence" value="ECO:0007669"/>
    <property type="project" value="UniProtKB-UniRule"/>
</dbReference>
<dbReference type="GO" id="GO:0042026">
    <property type="term" value="P:protein refolding"/>
    <property type="evidence" value="ECO:0007669"/>
    <property type="project" value="UniProtKB-UniRule"/>
</dbReference>
<dbReference type="CDD" id="cd03344">
    <property type="entry name" value="GroEL"/>
    <property type="match status" value="1"/>
</dbReference>
<dbReference type="FunFam" id="3.50.7.10:FF:000001">
    <property type="entry name" value="60 kDa chaperonin"/>
    <property type="match status" value="1"/>
</dbReference>
<dbReference type="Gene3D" id="3.50.7.10">
    <property type="entry name" value="GroEL"/>
    <property type="match status" value="1"/>
</dbReference>
<dbReference type="Gene3D" id="1.10.560.10">
    <property type="entry name" value="GroEL-like equatorial domain"/>
    <property type="match status" value="1"/>
</dbReference>
<dbReference type="Gene3D" id="3.30.260.10">
    <property type="entry name" value="TCP-1-like chaperonin intermediate domain"/>
    <property type="match status" value="1"/>
</dbReference>
<dbReference type="HAMAP" id="MF_00600">
    <property type="entry name" value="CH60"/>
    <property type="match status" value="1"/>
</dbReference>
<dbReference type="InterPro" id="IPR018370">
    <property type="entry name" value="Chaperonin_Cpn60_CS"/>
</dbReference>
<dbReference type="InterPro" id="IPR001844">
    <property type="entry name" value="Cpn60/GroEL"/>
</dbReference>
<dbReference type="InterPro" id="IPR002423">
    <property type="entry name" value="Cpn60/GroEL/TCP-1"/>
</dbReference>
<dbReference type="InterPro" id="IPR027409">
    <property type="entry name" value="GroEL-like_apical_dom_sf"/>
</dbReference>
<dbReference type="InterPro" id="IPR027413">
    <property type="entry name" value="GROEL-like_equatorial_sf"/>
</dbReference>
<dbReference type="InterPro" id="IPR027410">
    <property type="entry name" value="TCP-1-like_intermed_sf"/>
</dbReference>
<dbReference type="NCBIfam" id="TIGR02348">
    <property type="entry name" value="GroEL"/>
    <property type="match status" value="1"/>
</dbReference>
<dbReference type="NCBIfam" id="NF000592">
    <property type="entry name" value="PRK00013.1"/>
    <property type="match status" value="1"/>
</dbReference>
<dbReference type="NCBIfam" id="NF009487">
    <property type="entry name" value="PRK12849.1"/>
    <property type="match status" value="1"/>
</dbReference>
<dbReference type="NCBIfam" id="NF009488">
    <property type="entry name" value="PRK12850.1"/>
    <property type="match status" value="1"/>
</dbReference>
<dbReference type="NCBIfam" id="NF009489">
    <property type="entry name" value="PRK12851.1"/>
    <property type="match status" value="1"/>
</dbReference>
<dbReference type="PANTHER" id="PTHR45633">
    <property type="entry name" value="60 KDA HEAT SHOCK PROTEIN, MITOCHONDRIAL"/>
    <property type="match status" value="1"/>
</dbReference>
<dbReference type="Pfam" id="PF00118">
    <property type="entry name" value="Cpn60_TCP1"/>
    <property type="match status" value="1"/>
</dbReference>
<dbReference type="PRINTS" id="PR00298">
    <property type="entry name" value="CHAPERONIN60"/>
</dbReference>
<dbReference type="SUPFAM" id="SSF52029">
    <property type="entry name" value="GroEL apical domain-like"/>
    <property type="match status" value="1"/>
</dbReference>
<dbReference type="SUPFAM" id="SSF48592">
    <property type="entry name" value="GroEL equatorial domain-like"/>
    <property type="match status" value="1"/>
</dbReference>
<dbReference type="SUPFAM" id="SSF54849">
    <property type="entry name" value="GroEL-intermediate domain like"/>
    <property type="match status" value="1"/>
</dbReference>
<dbReference type="PROSITE" id="PS00296">
    <property type="entry name" value="CHAPERONINS_CPN60"/>
    <property type="match status" value="1"/>
</dbReference>